<comment type="similarity">
    <text evidence="2">Belongs to the SIS family. PHI subfamily.</text>
</comment>
<dbReference type="EMBL" id="AE000666">
    <property type="protein sequence ID" value="AAB84755.1"/>
    <property type="molecule type" value="Genomic_DNA"/>
</dbReference>
<dbReference type="PIR" id="B69131">
    <property type="entry name" value="B69131"/>
</dbReference>
<dbReference type="SMR" id="O26351"/>
<dbReference type="FunCoup" id="O26351">
    <property type="interactions" value="122"/>
</dbReference>
<dbReference type="STRING" id="187420.MTH_249"/>
<dbReference type="PaxDb" id="187420-MTH_249"/>
<dbReference type="EnsemblBacteria" id="AAB84755">
    <property type="protein sequence ID" value="AAB84755"/>
    <property type="gene ID" value="MTH_249"/>
</dbReference>
<dbReference type="KEGG" id="mth:MTH_249"/>
<dbReference type="PATRIC" id="fig|187420.15.peg.218"/>
<dbReference type="HOGENOM" id="CLU_094236_1_0_2"/>
<dbReference type="InParanoid" id="O26351"/>
<dbReference type="Proteomes" id="UP000005223">
    <property type="component" value="Chromosome"/>
</dbReference>
<dbReference type="GO" id="GO:0097367">
    <property type="term" value="F:carbohydrate derivative binding"/>
    <property type="evidence" value="ECO:0007669"/>
    <property type="project" value="InterPro"/>
</dbReference>
<dbReference type="GO" id="GO:0016853">
    <property type="term" value="F:isomerase activity"/>
    <property type="evidence" value="ECO:0007669"/>
    <property type="project" value="InterPro"/>
</dbReference>
<dbReference type="GO" id="GO:1901135">
    <property type="term" value="P:carbohydrate derivative metabolic process"/>
    <property type="evidence" value="ECO:0007669"/>
    <property type="project" value="InterPro"/>
</dbReference>
<dbReference type="CDD" id="cd05005">
    <property type="entry name" value="SIS_PHI"/>
    <property type="match status" value="1"/>
</dbReference>
<dbReference type="Gene3D" id="3.40.50.10490">
    <property type="entry name" value="Glucose-6-phosphate isomerase like protein, domain 1"/>
    <property type="match status" value="1"/>
</dbReference>
<dbReference type="InterPro" id="IPR017552">
    <property type="entry name" value="PHI/rmpB"/>
</dbReference>
<dbReference type="InterPro" id="IPR001347">
    <property type="entry name" value="SIS_dom"/>
</dbReference>
<dbReference type="InterPro" id="IPR046348">
    <property type="entry name" value="SIS_dom_sf"/>
</dbReference>
<dbReference type="NCBIfam" id="TIGR03127">
    <property type="entry name" value="RuMP_HxlB"/>
    <property type="match status" value="1"/>
</dbReference>
<dbReference type="PANTHER" id="PTHR43443">
    <property type="entry name" value="3-HEXULOSE-6-PHOSPHATE ISOMERASE"/>
    <property type="match status" value="1"/>
</dbReference>
<dbReference type="PANTHER" id="PTHR43443:SF1">
    <property type="entry name" value="3-HEXULOSE-6-PHOSPHATE ISOMERASE"/>
    <property type="match status" value="1"/>
</dbReference>
<dbReference type="Pfam" id="PF01380">
    <property type="entry name" value="SIS"/>
    <property type="match status" value="1"/>
</dbReference>
<dbReference type="SUPFAM" id="SSF53697">
    <property type="entry name" value="SIS domain"/>
    <property type="match status" value="1"/>
</dbReference>
<dbReference type="PROSITE" id="PS51464">
    <property type="entry name" value="SIS"/>
    <property type="match status" value="1"/>
</dbReference>
<accession>O26351</accession>
<protein>
    <recommendedName>
        <fullName>Uncharacterized protein MTH_249</fullName>
    </recommendedName>
</protein>
<keyword id="KW-1185">Reference proteome</keyword>
<feature type="chain" id="PRO_0000136571" description="Uncharacterized protein MTH_249">
    <location>
        <begin position="1"/>
        <end position="197"/>
    </location>
</feature>
<feature type="domain" description="SIS" evidence="1">
    <location>
        <begin position="33"/>
        <end position="184"/>
    </location>
</feature>
<reference key="1">
    <citation type="journal article" date="1997" name="J. Bacteriol.">
        <title>Complete genome sequence of Methanobacterium thermoautotrophicum deltaH: functional analysis and comparative genomics.</title>
        <authorList>
            <person name="Smith D.R."/>
            <person name="Doucette-Stamm L.A."/>
            <person name="Deloughery C."/>
            <person name="Lee H.-M."/>
            <person name="Dubois J."/>
            <person name="Aldredge T."/>
            <person name="Bashirzadeh R."/>
            <person name="Blakely D."/>
            <person name="Cook R."/>
            <person name="Gilbert K."/>
            <person name="Harrison D."/>
            <person name="Hoang L."/>
            <person name="Keagle P."/>
            <person name="Lumm W."/>
            <person name="Pothier B."/>
            <person name="Qiu D."/>
            <person name="Spadafora R."/>
            <person name="Vicare R."/>
            <person name="Wang Y."/>
            <person name="Wierzbowski J."/>
            <person name="Gibson R."/>
            <person name="Jiwani N."/>
            <person name="Caruso A."/>
            <person name="Bush D."/>
            <person name="Safer H."/>
            <person name="Patwell D."/>
            <person name="Prabhakar S."/>
            <person name="McDougall S."/>
            <person name="Shimer G."/>
            <person name="Goyal A."/>
            <person name="Pietrovski S."/>
            <person name="Church G.M."/>
            <person name="Daniels C.J."/>
            <person name="Mao J.-I."/>
            <person name="Rice P."/>
            <person name="Noelling J."/>
            <person name="Reeve J.N."/>
        </authorList>
    </citation>
    <scope>NUCLEOTIDE SEQUENCE [LARGE SCALE GENOMIC DNA]</scope>
    <source>
        <strain>ATCC 29096 / DSM 1053 / JCM 10044 / NBRC 100330 / Delta H</strain>
    </source>
</reference>
<name>Y249_METTH</name>
<gene>
    <name type="ordered locus">MTH_249</name>
</gene>
<evidence type="ECO:0000255" key="1">
    <source>
        <dbReference type="PROSITE-ProRule" id="PRU00797"/>
    </source>
</evidence>
<evidence type="ECO:0000305" key="2"/>
<proteinExistence type="inferred from homology"/>
<sequence>MIEMEILRNTVQKIAKHAIEAIDKVDEAELEMMISKIMDASSVFIVGTGRSELIGKAFAMRLMHLGFKVHVVGDVTTPAIRDEDCLIAISGSGETKTVTLAAETSRSVGATVVAVTATPESTLTGYSDVVICIPSKTKEPWKYYTSGVLRGEYDDLTPMGTLFEDSTHLFLDGLIAEFMSILGKREKDLKERHAIIE</sequence>
<organism>
    <name type="scientific">Methanothermobacter thermautotrophicus (strain ATCC 29096 / DSM 1053 / JCM 10044 / NBRC 100330 / Delta H)</name>
    <name type="common">Methanobacterium thermoautotrophicum</name>
    <dbReference type="NCBI Taxonomy" id="187420"/>
    <lineage>
        <taxon>Archaea</taxon>
        <taxon>Methanobacteriati</taxon>
        <taxon>Methanobacteriota</taxon>
        <taxon>Methanomada group</taxon>
        <taxon>Methanobacteria</taxon>
        <taxon>Methanobacteriales</taxon>
        <taxon>Methanobacteriaceae</taxon>
        <taxon>Methanothermobacter</taxon>
    </lineage>
</organism>